<keyword id="KW-0002">3D-structure</keyword>
<keyword id="KW-1064">Adaptive immunity</keyword>
<keyword id="KW-0025">Alternative splicing</keyword>
<keyword id="KW-0106">Calcium</keyword>
<keyword id="KW-1003">Cell membrane</keyword>
<keyword id="KW-1015">Disulfide bond</keyword>
<keyword id="KW-0325">Glycoprotein</keyword>
<keyword id="KW-0391">Immunity</keyword>
<keyword id="KW-0399">Innate immunity</keyword>
<keyword id="KW-0430">Lectin</keyword>
<keyword id="KW-0472">Membrane</keyword>
<keyword id="KW-0479">Metal-binding</keyword>
<keyword id="KW-1185">Reference proteome</keyword>
<keyword id="KW-0735">Signal-anchor</keyword>
<keyword id="KW-0812">Transmembrane</keyword>
<keyword id="KW-1133">Transmembrane helix</keyword>
<proteinExistence type="evidence at protein level"/>
<comment type="function">
    <text evidence="1 7 8">Calcium-dependent lectin that acts as a pattern recognition receptor (PRR) of the innate immune system: specifically recognizes and binds alpha-mannans on C.albicans hypheas (PubMed:23911656, PubMed:28652405). Binding of C.albicans alpha-mannans to this receptor complex leads to phosphorylation of the immunoreceptor tyrosine-based activation motif (ITAM) of FCER1G, triggering activation of SYK, CARD9 and NF-kappa-B, consequently driving maturation of antigen-presenting cells and shaping antigen-specific priming of T-cells toward effector T-helper 1 and T-helper 17 cell subtypes (By similarity). Recognizes also, in a mannose-dependent manner, allergens from house dust mite and fungi, by promoting cysteinyl leukotriene production (By similarity). Recognizes soluble elements from the eggs of Shistosoma mansoni altering adaptive immune responses (By similarity).</text>
</comment>
<comment type="subunit">
    <text evidence="1 7">Associated with FCER1G (By similarity). Heterodimer with CLEC4D; this heterodimer forms a pattern recognition receptor (PRR) against fungal infection (PubMed:23911656).</text>
</comment>
<comment type="subcellular location">
    <subcellularLocation>
        <location evidence="7">Cell membrane</location>
        <topology evidence="12">Single-pass type II membrane protein</topology>
    </subcellularLocation>
</comment>
<comment type="alternative products">
    <event type="alternative splicing"/>
    <isoform>
        <id>Q6EIG7-1</id>
        <name>1</name>
        <sequence type="displayed"/>
    </isoform>
    <isoform>
        <id>Q6EIG7-2</id>
        <name>2</name>
        <sequence type="described" ref="VSP_041514"/>
    </isoform>
</comment>
<comment type="tissue specificity">
    <text evidence="4 5 6">Expressed in lung, spleen, lymph node, leukocytes, bone marrow, tonsils and dendritic cells. Strongly expressed in purified monocytes and weakly in B-cells. In peripheral blood cells, preferentially expressed in plasmacytoids rather than myeloids.</text>
</comment>
<comment type="induction">
    <text evidence="6">Up-regulated by granulocyte-macrophage colony-stimulating factor (GM-CSF), TGF-beta 1, TNF-alpha and down-regulated by IL-4, IL-10 or UVB in CD14+ monocytes.</text>
</comment>
<comment type="domain">
    <text evidence="1">A short stretch of the intracellular domain (AA 8-14) proximal to the transmembrane domain is required for association with Fc receptor gamma chain.</text>
</comment>
<reference key="1">
    <citation type="journal article" date="2004" name="Immunogenetics">
        <title>Identification of lectin-like receptors expressed by antigen presenting cells and neutrophils and their mapping to a novel gene complex.</title>
        <authorList>
            <person name="Flornes L.M."/>
            <person name="Bryceson Y.T."/>
            <person name="Spurkland A."/>
            <person name="Lorentzen J.C."/>
            <person name="Dissen E."/>
            <person name="Fossum S."/>
        </authorList>
    </citation>
    <scope>NUCLEOTIDE SEQUENCE [MRNA]</scope>
    <scope>TISSUE SPECIFICITY</scope>
</reference>
<reference key="2">
    <citation type="journal article" date="2004" name="J. Invest. Dermatol.">
        <title>Molecular cloning of human dectin-2.</title>
        <authorList>
            <person name="Kanazawa N."/>
            <person name="Tashiro K."/>
            <person name="Inaba K."/>
            <person name="Lutz M.B."/>
            <person name="Miyachi Y."/>
        </authorList>
    </citation>
    <scope>NUCLEOTIDE SEQUENCE [MRNA]</scope>
    <scope>TISSUE SPECIFICITY</scope>
    <source>
        <tissue>Spleen</tissue>
    </source>
</reference>
<reference key="3">
    <citation type="journal article" date="2006" name="Nature">
        <title>The finished DNA sequence of human chromosome 12.</title>
        <authorList>
            <person name="Scherer S.E."/>
            <person name="Muzny D.M."/>
            <person name="Buhay C.J."/>
            <person name="Chen R."/>
            <person name="Cree A."/>
            <person name="Ding Y."/>
            <person name="Dugan-Rocha S."/>
            <person name="Gill R."/>
            <person name="Gunaratne P."/>
            <person name="Harris R.A."/>
            <person name="Hawes A.C."/>
            <person name="Hernandez J."/>
            <person name="Hodgson A.V."/>
            <person name="Hume J."/>
            <person name="Jackson A."/>
            <person name="Khan Z.M."/>
            <person name="Kovar-Smith C."/>
            <person name="Lewis L.R."/>
            <person name="Lozado R.J."/>
            <person name="Metzker M.L."/>
            <person name="Milosavljevic A."/>
            <person name="Miner G.R."/>
            <person name="Montgomery K.T."/>
            <person name="Morgan M.B."/>
            <person name="Nazareth L.V."/>
            <person name="Scott G."/>
            <person name="Sodergren E."/>
            <person name="Song X.-Z."/>
            <person name="Steffen D."/>
            <person name="Lovering R.C."/>
            <person name="Wheeler D.A."/>
            <person name="Worley K.C."/>
            <person name="Yuan Y."/>
            <person name="Zhang Z."/>
            <person name="Adams C.Q."/>
            <person name="Ansari-Lari M.A."/>
            <person name="Ayele M."/>
            <person name="Brown M.J."/>
            <person name="Chen G."/>
            <person name="Chen Z."/>
            <person name="Clerc-Blankenburg K.P."/>
            <person name="Davis C."/>
            <person name="Delgado O."/>
            <person name="Dinh H.H."/>
            <person name="Draper H."/>
            <person name="Gonzalez-Garay M.L."/>
            <person name="Havlak P."/>
            <person name="Jackson L.R."/>
            <person name="Jacob L.S."/>
            <person name="Kelly S.H."/>
            <person name="Li L."/>
            <person name="Li Z."/>
            <person name="Liu J."/>
            <person name="Liu W."/>
            <person name="Lu J."/>
            <person name="Maheshwari M."/>
            <person name="Nguyen B.-V."/>
            <person name="Okwuonu G.O."/>
            <person name="Pasternak S."/>
            <person name="Perez L.M."/>
            <person name="Plopper F.J.H."/>
            <person name="Santibanez J."/>
            <person name="Shen H."/>
            <person name="Tabor P.E."/>
            <person name="Verduzco D."/>
            <person name="Waldron L."/>
            <person name="Wang Q."/>
            <person name="Williams G.A."/>
            <person name="Zhang J."/>
            <person name="Zhou J."/>
            <person name="Allen C.C."/>
            <person name="Amin A.G."/>
            <person name="Anyalebechi V."/>
            <person name="Bailey M."/>
            <person name="Barbaria J.A."/>
            <person name="Bimage K.E."/>
            <person name="Bryant N.P."/>
            <person name="Burch P.E."/>
            <person name="Burkett C.E."/>
            <person name="Burrell K.L."/>
            <person name="Calderon E."/>
            <person name="Cardenas V."/>
            <person name="Carter K."/>
            <person name="Casias K."/>
            <person name="Cavazos I."/>
            <person name="Cavazos S.R."/>
            <person name="Ceasar H."/>
            <person name="Chacko J."/>
            <person name="Chan S.N."/>
            <person name="Chavez D."/>
            <person name="Christopoulos C."/>
            <person name="Chu J."/>
            <person name="Cockrell R."/>
            <person name="Cox C.D."/>
            <person name="Dang M."/>
            <person name="Dathorne S.R."/>
            <person name="David R."/>
            <person name="Davis C.M."/>
            <person name="Davy-Carroll L."/>
            <person name="Deshazo D.R."/>
            <person name="Donlin J.E."/>
            <person name="D'Souza L."/>
            <person name="Eaves K.A."/>
            <person name="Egan A."/>
            <person name="Emery-Cohen A.J."/>
            <person name="Escotto M."/>
            <person name="Flagg N."/>
            <person name="Forbes L.D."/>
            <person name="Gabisi A.M."/>
            <person name="Garza M."/>
            <person name="Hamilton C."/>
            <person name="Henderson N."/>
            <person name="Hernandez O."/>
            <person name="Hines S."/>
            <person name="Hogues M.E."/>
            <person name="Huang M."/>
            <person name="Idlebird D.G."/>
            <person name="Johnson R."/>
            <person name="Jolivet A."/>
            <person name="Jones S."/>
            <person name="Kagan R."/>
            <person name="King L.M."/>
            <person name="Leal B."/>
            <person name="Lebow H."/>
            <person name="Lee S."/>
            <person name="LeVan J.M."/>
            <person name="Lewis L.C."/>
            <person name="London P."/>
            <person name="Lorensuhewa L.M."/>
            <person name="Loulseged H."/>
            <person name="Lovett D.A."/>
            <person name="Lucier A."/>
            <person name="Lucier R.L."/>
            <person name="Ma J."/>
            <person name="Madu R.C."/>
            <person name="Mapua P."/>
            <person name="Martindale A.D."/>
            <person name="Martinez E."/>
            <person name="Massey E."/>
            <person name="Mawhiney S."/>
            <person name="Meador M.G."/>
            <person name="Mendez S."/>
            <person name="Mercado C."/>
            <person name="Mercado I.C."/>
            <person name="Merritt C.E."/>
            <person name="Miner Z.L."/>
            <person name="Minja E."/>
            <person name="Mitchell T."/>
            <person name="Mohabbat F."/>
            <person name="Mohabbat K."/>
            <person name="Montgomery B."/>
            <person name="Moore N."/>
            <person name="Morris S."/>
            <person name="Munidasa M."/>
            <person name="Ngo R.N."/>
            <person name="Nguyen N.B."/>
            <person name="Nickerson E."/>
            <person name="Nwaokelemeh O.O."/>
            <person name="Nwokenkwo S."/>
            <person name="Obregon M."/>
            <person name="Oguh M."/>
            <person name="Oragunye N."/>
            <person name="Oviedo R.J."/>
            <person name="Parish B.J."/>
            <person name="Parker D.N."/>
            <person name="Parrish J."/>
            <person name="Parks K.L."/>
            <person name="Paul H.A."/>
            <person name="Payton B.A."/>
            <person name="Perez A."/>
            <person name="Perrin W."/>
            <person name="Pickens A."/>
            <person name="Primus E.L."/>
            <person name="Pu L.-L."/>
            <person name="Puazo M."/>
            <person name="Quiles M.M."/>
            <person name="Quiroz J.B."/>
            <person name="Rabata D."/>
            <person name="Reeves K."/>
            <person name="Ruiz S.J."/>
            <person name="Shao H."/>
            <person name="Sisson I."/>
            <person name="Sonaike T."/>
            <person name="Sorelle R.P."/>
            <person name="Sutton A.E."/>
            <person name="Svatek A.F."/>
            <person name="Svetz L.A."/>
            <person name="Tamerisa K.S."/>
            <person name="Taylor T.R."/>
            <person name="Teague B."/>
            <person name="Thomas N."/>
            <person name="Thorn R.D."/>
            <person name="Trejos Z.Y."/>
            <person name="Trevino B.K."/>
            <person name="Ukegbu O.N."/>
            <person name="Urban J.B."/>
            <person name="Vasquez L.I."/>
            <person name="Vera V.A."/>
            <person name="Villasana D.M."/>
            <person name="Wang L."/>
            <person name="Ward-Moore S."/>
            <person name="Warren J.T."/>
            <person name="Wei X."/>
            <person name="White F."/>
            <person name="Williamson A.L."/>
            <person name="Wleczyk R."/>
            <person name="Wooden H.S."/>
            <person name="Wooden S.H."/>
            <person name="Yen J."/>
            <person name="Yoon L."/>
            <person name="Yoon V."/>
            <person name="Zorrilla S.E."/>
            <person name="Nelson D."/>
            <person name="Kucherlapati R."/>
            <person name="Weinstock G."/>
            <person name="Gibbs R.A."/>
        </authorList>
    </citation>
    <scope>NUCLEOTIDE SEQUENCE [LARGE SCALE GENOMIC DNA]</scope>
</reference>
<reference key="4">
    <citation type="journal article" date="2004" name="Genome Res.">
        <title>The status, quality, and expansion of the NIH full-length cDNA project: the Mammalian Gene Collection (MGC).</title>
        <authorList>
            <consortium name="The MGC Project Team"/>
        </authorList>
    </citation>
    <scope>NUCLEOTIDE SEQUENCE [LARGE SCALE MRNA]</scope>
</reference>
<reference key="5">
    <citation type="journal article" date="2005" name="Exp. Dermatol.">
        <title>Identification and expression profiling of a human C-type lectin, structurally homologous to mouse dectin-2.</title>
        <authorList>
            <person name="Gavino A.C."/>
            <person name="Chung J.S."/>
            <person name="Sato K."/>
            <person name="Ariizumi K."/>
            <person name="Cruz P.D. Jr."/>
        </authorList>
    </citation>
    <scope>TISSUE SPECIFICITY</scope>
    <scope>INDUCTION</scope>
    <scope>ALTERNATIVE SPLICING (ISOFORM 2)</scope>
</reference>
<reference key="6">
    <citation type="journal article" date="2013" name="Immunity">
        <title>C-type lectin receptors Dectin-3 and Dectin-2 form a heterodimeric pattern-recognition receptor for host defense against fungal infection.</title>
        <authorList>
            <person name="Zhu L.L."/>
            <person name="Zhao X.Q."/>
            <person name="Jiang C."/>
            <person name="You Y."/>
            <person name="Chen X.P."/>
            <person name="Jiang Y.Y."/>
            <person name="Jia X.M."/>
            <person name="Lin X."/>
        </authorList>
    </citation>
    <scope>FUNCTION</scope>
    <scope>SUBCELLULAR LOCATION</scope>
    <scope>INTERACTION WITH CLEC6A</scope>
</reference>
<reference evidence="14" key="7">
    <citation type="journal article" date="2017" name="J. Biol. Chem.">
        <title>Mechanism of pathogen recognition by human dectin-2.</title>
        <authorList>
            <person name="Feinberg H."/>
            <person name="Jegouzo S.A.F."/>
            <person name="Rex M.J."/>
            <person name="Drickamer K."/>
            <person name="Weis W.I."/>
            <person name="Taylor M.E."/>
        </authorList>
    </citation>
    <scope>X-RAY CRYSTALLOGRAPHY (2.40 ANGSTROMS) OF 64-209 IN COMPLEX WITH HIGH-MANNOSE CARBOHYDRATE AND CALCIUM</scope>
    <scope>DISULFIDE BOND</scope>
    <scope>FUNCTION</scope>
</reference>
<sequence>MMQEQQPQSTEKRGWLSLRLWSVAGISIALLSACFIVSCVVTYHFTYGETGKRLSELHSYHSSLTCFSEGTKVPAWGCCPASWKSFGSSCYFISSEEKVWSKSEQNCVEMGAHLVVFNTEAEQNFIVQQLNESFSYFLGLSDPQGNNNWQWIDKTPYEKNVRFWHLGEPNHSAEQCASIVFWKPTGWGWNDVICETRRNSICEMNKIYL</sequence>
<evidence type="ECO:0000250" key="1">
    <source>
        <dbReference type="UniProtKB" id="Q9JKF4"/>
    </source>
</evidence>
<evidence type="ECO:0000255" key="2"/>
<evidence type="ECO:0000255" key="3">
    <source>
        <dbReference type="PROSITE-ProRule" id="PRU00040"/>
    </source>
</evidence>
<evidence type="ECO:0000269" key="4">
    <source>
    </source>
</evidence>
<evidence type="ECO:0000269" key="5">
    <source>
    </source>
</evidence>
<evidence type="ECO:0000269" key="6">
    <source>
    </source>
</evidence>
<evidence type="ECO:0000269" key="7">
    <source>
    </source>
</evidence>
<evidence type="ECO:0000269" key="8">
    <source>
    </source>
</evidence>
<evidence type="ECO:0000303" key="9">
    <source>
    </source>
</evidence>
<evidence type="ECO:0000303" key="10">
    <source>
    </source>
</evidence>
<evidence type="ECO:0000303" key="11">
    <source>
    </source>
</evidence>
<evidence type="ECO:0000305" key="12"/>
<evidence type="ECO:0000312" key="13">
    <source>
        <dbReference type="HGNC" id="HGNC:14556"/>
    </source>
</evidence>
<evidence type="ECO:0007744" key="14">
    <source>
        <dbReference type="PDB" id="5VYB"/>
    </source>
</evidence>
<evidence type="ECO:0007829" key="15">
    <source>
        <dbReference type="PDB" id="8ROV"/>
    </source>
</evidence>
<organism>
    <name type="scientific">Homo sapiens</name>
    <name type="common">Human</name>
    <dbReference type="NCBI Taxonomy" id="9606"/>
    <lineage>
        <taxon>Eukaryota</taxon>
        <taxon>Metazoa</taxon>
        <taxon>Chordata</taxon>
        <taxon>Craniata</taxon>
        <taxon>Vertebrata</taxon>
        <taxon>Euteleostomi</taxon>
        <taxon>Mammalia</taxon>
        <taxon>Eutheria</taxon>
        <taxon>Euarchontoglires</taxon>
        <taxon>Primates</taxon>
        <taxon>Haplorrhini</taxon>
        <taxon>Catarrhini</taxon>
        <taxon>Hominidae</taxon>
        <taxon>Homo</taxon>
    </lineage>
</organism>
<name>CLC6A_HUMAN</name>
<dbReference type="EMBL" id="AY365135">
    <property type="protein sequence ID" value="AAR13071.1"/>
    <property type="molecule type" value="mRNA"/>
</dbReference>
<dbReference type="EMBL" id="AY321309">
    <property type="protein sequence ID" value="AAQ83725.1"/>
    <property type="molecule type" value="mRNA"/>
</dbReference>
<dbReference type="EMBL" id="AC092746">
    <property type="status" value="NOT_ANNOTATED_CDS"/>
    <property type="molecule type" value="Genomic_DNA"/>
</dbReference>
<dbReference type="EMBL" id="AC092865">
    <property type="status" value="NOT_ANNOTATED_CDS"/>
    <property type="molecule type" value="Genomic_DNA"/>
</dbReference>
<dbReference type="EMBL" id="BC132933">
    <property type="protein sequence ID" value="AAI32934.1"/>
    <property type="molecule type" value="mRNA"/>
</dbReference>
<dbReference type="EMBL" id="BC132935">
    <property type="protein sequence ID" value="AAI32936.1"/>
    <property type="molecule type" value="mRNA"/>
</dbReference>
<dbReference type="CCDS" id="CCDS31739.1">
    <molecule id="Q6EIG7-1"/>
</dbReference>
<dbReference type="RefSeq" id="NP_001007034.1">
    <molecule id="Q6EIG7-1"/>
    <property type="nucleotide sequence ID" value="NM_001007033.2"/>
</dbReference>
<dbReference type="RefSeq" id="NP_001304928.1">
    <molecule id="Q6EIG7-2"/>
    <property type="nucleotide sequence ID" value="NM_001317999.2"/>
</dbReference>
<dbReference type="PDB" id="5VYB">
    <property type="method" value="X-ray"/>
    <property type="resolution" value="2.40 A"/>
    <property type="chains" value="A=64-209"/>
</dbReference>
<dbReference type="PDB" id="8ROV">
    <property type="method" value="X-ray"/>
    <property type="resolution" value="2.36 A"/>
    <property type="chains" value="A/B=44-209"/>
</dbReference>
<dbReference type="PDBsum" id="5VYB"/>
<dbReference type="PDBsum" id="8ROV"/>
<dbReference type="SMR" id="Q6EIG7"/>
<dbReference type="FunCoup" id="Q6EIG7">
    <property type="interactions" value="199"/>
</dbReference>
<dbReference type="STRING" id="9606.ENSP00000371505"/>
<dbReference type="ChEMBL" id="CHEMBL2176856"/>
<dbReference type="UniLectin" id="Q6EIG7"/>
<dbReference type="GlyCosmos" id="Q6EIG7">
    <property type="glycosylation" value="2 sites, No reported glycans"/>
</dbReference>
<dbReference type="GlyGen" id="Q6EIG7">
    <property type="glycosylation" value="2 sites"/>
</dbReference>
<dbReference type="iPTMnet" id="Q6EIG7"/>
<dbReference type="PhosphoSitePlus" id="Q6EIG7"/>
<dbReference type="BioMuta" id="CLEC6A"/>
<dbReference type="DMDM" id="59797926"/>
<dbReference type="MassIVE" id="Q6EIG7"/>
<dbReference type="PaxDb" id="9606-ENSP00000371505"/>
<dbReference type="PeptideAtlas" id="Q6EIG7"/>
<dbReference type="Antibodypedia" id="23055">
    <property type="antibodies" value="467 antibodies from 30 providers"/>
</dbReference>
<dbReference type="DNASU" id="93978"/>
<dbReference type="Ensembl" id="ENST00000382073.4">
    <molecule id="Q6EIG7-1"/>
    <property type="protein sequence ID" value="ENSP00000371505.3"/>
    <property type="gene ID" value="ENSG00000205846.4"/>
</dbReference>
<dbReference type="GeneID" id="93978"/>
<dbReference type="KEGG" id="hsa:93978"/>
<dbReference type="MANE-Select" id="ENST00000382073.4">
    <property type="protein sequence ID" value="ENSP00000371505.3"/>
    <property type="RefSeq nucleotide sequence ID" value="NM_001007033.2"/>
    <property type="RefSeq protein sequence ID" value="NP_001007034.1"/>
</dbReference>
<dbReference type="UCSC" id="uc001qum.2">
    <molecule id="Q6EIG7-1"/>
    <property type="organism name" value="human"/>
</dbReference>
<dbReference type="AGR" id="HGNC:14556"/>
<dbReference type="CTD" id="93978"/>
<dbReference type="DisGeNET" id="93978"/>
<dbReference type="GeneCards" id="CLEC6A"/>
<dbReference type="HGNC" id="HGNC:14556">
    <property type="gene designation" value="CLEC6A"/>
</dbReference>
<dbReference type="HPA" id="ENSG00000205846">
    <property type="expression patterns" value="Tissue enhanced (lung, lymphoid tissue)"/>
</dbReference>
<dbReference type="MIM" id="613579">
    <property type="type" value="gene"/>
</dbReference>
<dbReference type="neXtProt" id="NX_Q6EIG7"/>
<dbReference type="OpenTargets" id="ENSG00000205846"/>
<dbReference type="PharmGKB" id="PA26579"/>
<dbReference type="VEuPathDB" id="HostDB:ENSG00000205846"/>
<dbReference type="eggNOG" id="KOG4297">
    <property type="taxonomic scope" value="Eukaryota"/>
</dbReference>
<dbReference type="GeneTree" id="ENSGT00940000162938"/>
<dbReference type="HOGENOM" id="CLU_049894_7_5_1"/>
<dbReference type="InParanoid" id="Q6EIG7"/>
<dbReference type="OMA" id="EKNVRFW"/>
<dbReference type="PAN-GO" id="Q6EIG7">
    <property type="GO annotations" value="3 GO annotations based on evolutionary models"/>
</dbReference>
<dbReference type="PhylomeDB" id="Q6EIG7"/>
<dbReference type="TreeFam" id="TF333341"/>
<dbReference type="PathwayCommons" id="Q6EIG7"/>
<dbReference type="Reactome" id="R-HSA-5621480">
    <property type="pathway name" value="Dectin-2 family"/>
</dbReference>
<dbReference type="SignaLink" id="Q6EIG7"/>
<dbReference type="BioGRID-ORCS" id="93978">
    <property type="hits" value="7 hits in 1109 CRISPR screens"/>
</dbReference>
<dbReference type="ChiTaRS" id="CLEC6A">
    <property type="organism name" value="human"/>
</dbReference>
<dbReference type="GenomeRNAi" id="93978"/>
<dbReference type="Pharos" id="Q6EIG7">
    <property type="development level" value="Tbio"/>
</dbReference>
<dbReference type="PRO" id="PR:Q6EIG7"/>
<dbReference type="Proteomes" id="UP000005640">
    <property type="component" value="Chromosome 12"/>
</dbReference>
<dbReference type="RNAct" id="Q6EIG7">
    <property type="molecule type" value="protein"/>
</dbReference>
<dbReference type="Bgee" id="ENSG00000205846">
    <property type="expression patterns" value="Expressed in male germ line stem cell (sensu Vertebrata) in testis and 24 other cell types or tissues"/>
</dbReference>
<dbReference type="GO" id="GO:0009897">
    <property type="term" value="C:external side of plasma membrane"/>
    <property type="evidence" value="ECO:0000318"/>
    <property type="project" value="GO_Central"/>
</dbReference>
<dbReference type="GO" id="GO:0005886">
    <property type="term" value="C:plasma membrane"/>
    <property type="evidence" value="ECO:0000314"/>
    <property type="project" value="UniProtKB"/>
</dbReference>
<dbReference type="GO" id="GO:0005509">
    <property type="term" value="F:calcium ion binding"/>
    <property type="evidence" value="ECO:0000314"/>
    <property type="project" value="UniProtKB"/>
</dbReference>
<dbReference type="GO" id="GO:0030246">
    <property type="term" value="F:carbohydrate binding"/>
    <property type="evidence" value="ECO:0000314"/>
    <property type="project" value="UniProtKB"/>
</dbReference>
<dbReference type="GO" id="GO:0005537">
    <property type="term" value="F:D-mannose binding"/>
    <property type="evidence" value="ECO:0000314"/>
    <property type="project" value="UniProtKB"/>
</dbReference>
<dbReference type="GO" id="GO:0038187">
    <property type="term" value="F:pattern recognition receptor activity"/>
    <property type="evidence" value="ECO:0000314"/>
    <property type="project" value="UniProtKB"/>
</dbReference>
<dbReference type="GO" id="GO:0043274">
    <property type="term" value="F:phospholipase binding"/>
    <property type="evidence" value="ECO:0000250"/>
    <property type="project" value="ARUK-UCL"/>
</dbReference>
<dbReference type="GO" id="GO:0002250">
    <property type="term" value="P:adaptive immune response"/>
    <property type="evidence" value="ECO:0007669"/>
    <property type="project" value="UniProtKB-KW"/>
</dbReference>
<dbReference type="GO" id="GO:0061760">
    <property type="term" value="P:antifungal innate immune response"/>
    <property type="evidence" value="ECO:0000250"/>
    <property type="project" value="UniProtKB"/>
</dbReference>
<dbReference type="GO" id="GO:0050832">
    <property type="term" value="P:defense response to fungus"/>
    <property type="evidence" value="ECO:0000250"/>
    <property type="project" value="UniProtKB"/>
</dbReference>
<dbReference type="GO" id="GO:0001879">
    <property type="term" value="P:detection of yeast"/>
    <property type="evidence" value="ECO:0000250"/>
    <property type="project" value="ARUK-UCL"/>
</dbReference>
<dbReference type="GO" id="GO:0045087">
    <property type="term" value="P:innate immune response"/>
    <property type="evidence" value="ECO:0000250"/>
    <property type="project" value="UniProtKB"/>
</dbReference>
<dbReference type="GO" id="GO:0043123">
    <property type="term" value="P:positive regulation of canonical NF-kappaB signal transduction"/>
    <property type="evidence" value="ECO:0000250"/>
    <property type="project" value="UniProtKB"/>
</dbReference>
<dbReference type="GO" id="GO:0001819">
    <property type="term" value="P:positive regulation of cytokine production"/>
    <property type="evidence" value="ECO:0000250"/>
    <property type="project" value="UniProtKB"/>
</dbReference>
<dbReference type="GO" id="GO:1902533">
    <property type="term" value="P:positive regulation of intracellular signal transduction"/>
    <property type="evidence" value="ECO:0000250"/>
    <property type="project" value="ARUK-UCL"/>
</dbReference>
<dbReference type="GO" id="GO:2000318">
    <property type="term" value="P:positive regulation of T-helper 17 type immune response"/>
    <property type="evidence" value="ECO:0000250"/>
    <property type="project" value="UniProtKB"/>
</dbReference>
<dbReference type="GO" id="GO:0001878">
    <property type="term" value="P:response to yeast"/>
    <property type="evidence" value="ECO:0000250"/>
    <property type="project" value="ARUK-UCL"/>
</dbReference>
<dbReference type="GO" id="GO:0002223">
    <property type="term" value="P:stimulatory C-type lectin receptor signaling pathway"/>
    <property type="evidence" value="ECO:0000250"/>
    <property type="project" value="ARUK-UCL"/>
</dbReference>
<dbReference type="CDD" id="cd03590">
    <property type="entry name" value="CLECT_DC-SIGN_like"/>
    <property type="match status" value="1"/>
</dbReference>
<dbReference type="FunFam" id="3.10.100.10:FF:000024">
    <property type="entry name" value="C-type lectin domain family 4 member A"/>
    <property type="match status" value="1"/>
</dbReference>
<dbReference type="Gene3D" id="3.10.100.10">
    <property type="entry name" value="Mannose-Binding Protein A, subunit A"/>
    <property type="match status" value="1"/>
</dbReference>
<dbReference type="InterPro" id="IPR001304">
    <property type="entry name" value="C-type_lectin-like"/>
</dbReference>
<dbReference type="InterPro" id="IPR016186">
    <property type="entry name" value="C-type_lectin-like/link_sf"/>
</dbReference>
<dbReference type="InterPro" id="IPR050111">
    <property type="entry name" value="C-type_lectin/snaclec_domain"/>
</dbReference>
<dbReference type="InterPro" id="IPR033989">
    <property type="entry name" value="CD209-like_CTLD"/>
</dbReference>
<dbReference type="InterPro" id="IPR016187">
    <property type="entry name" value="CTDL_fold"/>
</dbReference>
<dbReference type="PANTHER" id="PTHR22803">
    <property type="entry name" value="MANNOSE, PHOSPHOLIPASE, LECTIN RECEPTOR RELATED"/>
    <property type="match status" value="1"/>
</dbReference>
<dbReference type="Pfam" id="PF00059">
    <property type="entry name" value="Lectin_C"/>
    <property type="match status" value="1"/>
</dbReference>
<dbReference type="SMART" id="SM00034">
    <property type="entry name" value="CLECT"/>
    <property type="match status" value="1"/>
</dbReference>
<dbReference type="SUPFAM" id="SSF56436">
    <property type="entry name" value="C-type lectin-like"/>
    <property type="match status" value="1"/>
</dbReference>
<dbReference type="PROSITE" id="PS50041">
    <property type="entry name" value="C_TYPE_LECTIN_2"/>
    <property type="match status" value="1"/>
</dbReference>
<accession>Q6EIG7</accession>
<accession>A2RUK3</accession>
<gene>
    <name evidence="13" type="primary">CLEC6A</name>
    <name type="synonym">CLECSF10</name>
    <name evidence="9 10 11" type="synonym">DECTIN2</name>
</gene>
<feature type="chain" id="PRO_0000046635" description="C-type lectin domain family 6 member A">
    <location>
        <begin position="1"/>
        <end position="209"/>
    </location>
</feature>
<feature type="topological domain" description="Cytoplasmic" evidence="2">
    <location>
        <begin position="1"/>
        <end position="20"/>
    </location>
</feature>
<feature type="transmembrane region" description="Helical; Signal-anchor for type II membrane protein" evidence="2">
    <location>
        <begin position="21"/>
        <end position="41"/>
    </location>
</feature>
<feature type="topological domain" description="Extracellular" evidence="2">
    <location>
        <begin position="42"/>
        <end position="209"/>
    </location>
</feature>
<feature type="domain" description="C-type lectin" evidence="3">
    <location>
        <begin position="86"/>
        <end position="203"/>
    </location>
</feature>
<feature type="binding site" evidence="8 14">
    <location>
        <position position="116"/>
    </location>
    <ligand>
        <name>Ca(2+)</name>
        <dbReference type="ChEBI" id="CHEBI:29108"/>
        <label>1</label>
    </ligand>
</feature>
<feature type="binding site" evidence="8 14">
    <location>
        <position position="118"/>
    </location>
    <ligand>
        <name>Ca(2+)</name>
        <dbReference type="ChEBI" id="CHEBI:29108"/>
        <label>1</label>
    </ligand>
</feature>
<feature type="binding site" evidence="8 14">
    <location>
        <position position="122"/>
    </location>
    <ligand>
        <name>Ca(2+)</name>
        <dbReference type="ChEBI" id="CHEBI:29108"/>
        <label>1</label>
    </ligand>
</feature>
<feature type="binding site" evidence="8 14">
    <location>
        <begin position="168"/>
        <end position="170"/>
    </location>
    <ligand>
        <name>alpha-D-mannopyranose</name>
        <dbReference type="ChEBI" id="CHEBI:28729"/>
    </ligand>
</feature>
<feature type="binding site" evidence="8 14">
    <location>
        <position position="168"/>
    </location>
    <ligand>
        <name>Ca(2+)</name>
        <dbReference type="ChEBI" id="CHEBI:29108"/>
        <label>2</label>
    </ligand>
</feature>
<feature type="binding site" evidence="8 14">
    <location>
        <position position="170"/>
    </location>
    <ligand>
        <name>Ca(2+)</name>
        <dbReference type="ChEBI" id="CHEBI:29108"/>
        <label>2</label>
    </ligand>
</feature>
<feature type="binding site" evidence="8 14">
    <location>
        <position position="174"/>
    </location>
    <ligand>
        <name>alpha-D-mannopyranose</name>
        <dbReference type="ChEBI" id="CHEBI:28729"/>
    </ligand>
</feature>
<feature type="binding site" evidence="8 14">
    <location>
        <position position="174"/>
    </location>
    <ligand>
        <name>Ca(2+)</name>
        <dbReference type="ChEBI" id="CHEBI:29108"/>
        <label>2</label>
    </ligand>
</feature>
<feature type="binding site" evidence="8 14">
    <location>
        <position position="182"/>
    </location>
    <ligand>
        <name>alpha-D-mannopyranose</name>
        <dbReference type="ChEBI" id="CHEBI:28729"/>
    </ligand>
</feature>
<feature type="binding site" evidence="8 14">
    <location>
        <begin position="190"/>
        <end position="191"/>
    </location>
    <ligand>
        <name>alpha-D-mannopyranose</name>
        <dbReference type="ChEBI" id="CHEBI:28729"/>
    </ligand>
</feature>
<feature type="binding site" evidence="8 14">
    <location>
        <position position="190"/>
    </location>
    <ligand>
        <name>Ca(2+)</name>
        <dbReference type="ChEBI" id="CHEBI:29108"/>
        <label>2</label>
    </ligand>
</feature>
<feature type="binding site" evidence="8 14">
    <location>
        <position position="191"/>
    </location>
    <ligand>
        <name>Ca(2+)</name>
        <dbReference type="ChEBI" id="CHEBI:29108"/>
        <label>2</label>
    </ligand>
</feature>
<feature type="binding site" evidence="8 14">
    <location>
        <position position="198"/>
    </location>
    <ligand>
        <name>alpha-D-mannopyranose</name>
        <dbReference type="ChEBI" id="CHEBI:28729"/>
    </ligand>
</feature>
<feature type="binding site" evidence="8 14">
    <location>
        <position position="203"/>
    </location>
    <ligand>
        <name>Ca(2+)</name>
        <dbReference type="ChEBI" id="CHEBI:29108"/>
        <label>1</label>
    </ligand>
</feature>
<feature type="glycosylation site" description="N-linked (GlcNAc...) asparagine" evidence="2">
    <location>
        <position position="131"/>
    </location>
</feature>
<feature type="glycosylation site" description="N-linked (GlcNAc...) asparagine" evidence="2">
    <location>
        <position position="170"/>
    </location>
</feature>
<feature type="disulfide bond" evidence="8 14">
    <location>
        <begin position="66"/>
        <end position="78"/>
    </location>
</feature>
<feature type="disulfide bond" evidence="3 8 14">
    <location>
        <begin position="79"/>
        <end position="90"/>
    </location>
</feature>
<feature type="disulfide bond" evidence="3 8 14">
    <location>
        <begin position="107"/>
        <end position="202"/>
    </location>
</feature>
<feature type="disulfide bond" evidence="3 8 14">
    <location>
        <begin position="176"/>
        <end position="194"/>
    </location>
</feature>
<feature type="splice variant" id="VSP_041514" description="In isoform 2." evidence="12">
    <location>
        <begin position="11"/>
        <end position="40"/>
    </location>
</feature>
<feature type="strand" evidence="15">
    <location>
        <begin position="63"/>
        <end position="68"/>
    </location>
</feature>
<feature type="strand" evidence="15">
    <location>
        <begin position="76"/>
        <end position="80"/>
    </location>
</feature>
<feature type="strand" evidence="15">
    <location>
        <begin position="83"/>
        <end position="86"/>
    </location>
</feature>
<feature type="strand" evidence="15">
    <location>
        <begin position="89"/>
        <end position="98"/>
    </location>
</feature>
<feature type="helix" evidence="15">
    <location>
        <begin position="100"/>
        <end position="108"/>
    </location>
</feature>
<feature type="turn" evidence="15">
    <location>
        <begin position="109"/>
        <end position="111"/>
    </location>
</feature>
<feature type="helix" evidence="15">
    <location>
        <begin position="120"/>
        <end position="126"/>
    </location>
</feature>
<feature type="helix" evidence="15">
    <location>
        <begin position="127"/>
        <end position="129"/>
    </location>
</feature>
<feature type="strand" evidence="15">
    <location>
        <begin position="136"/>
        <end position="141"/>
    </location>
</feature>
<feature type="strand" evidence="15">
    <location>
        <begin position="145"/>
        <end position="147"/>
    </location>
</feature>
<feature type="strand" evidence="15">
    <location>
        <begin position="157"/>
        <end position="160"/>
    </location>
</feature>
<feature type="strand" evidence="15">
    <location>
        <begin position="176"/>
        <end position="182"/>
    </location>
</feature>
<feature type="turn" evidence="15">
    <location>
        <begin position="183"/>
        <end position="185"/>
    </location>
</feature>
<feature type="strand" evidence="15">
    <location>
        <begin position="186"/>
        <end position="192"/>
    </location>
</feature>
<feature type="strand" evidence="15">
    <location>
        <begin position="198"/>
        <end position="205"/>
    </location>
</feature>
<feature type="strand" evidence="15">
    <location>
        <begin position="207"/>
        <end position="209"/>
    </location>
</feature>
<protein>
    <recommendedName>
        <fullName evidence="12">C-type lectin domain family 6 member A</fullName>
    </recommendedName>
    <alternativeName>
        <fullName>C-type lectin superfamily member 10</fullName>
    </alternativeName>
    <alternativeName>
        <fullName>Dendritic cell-associated C-type lectin 2</fullName>
        <shortName>DC-associated C-type lectin 2</shortName>
        <shortName evidence="9 10 11">Dectin-2</shortName>
    </alternativeName>
</protein>